<reference key="1">
    <citation type="submission" date="2006-11" db="EMBL/GenBank/DDBJ databases">
        <title>Sequence of Campylobacter fetus subsp. fetus 82-40.</title>
        <authorList>
            <person name="Fouts D.E."/>
            <person name="Nelson K.E."/>
        </authorList>
    </citation>
    <scope>NUCLEOTIDE SEQUENCE [LARGE SCALE GENOMIC DNA]</scope>
    <source>
        <strain>82-40</strain>
    </source>
</reference>
<evidence type="ECO:0000255" key="1">
    <source>
        <dbReference type="HAMAP-Rule" id="MF_00022"/>
    </source>
</evidence>
<protein>
    <recommendedName>
        <fullName evidence="1">Glutamate--tRNA ligase 1</fullName>
        <ecNumber evidence="1">6.1.1.17</ecNumber>
    </recommendedName>
    <alternativeName>
        <fullName evidence="1">Glutamyl-tRNA synthetase 1</fullName>
        <shortName evidence="1">GluRS 1</shortName>
    </alternativeName>
</protein>
<feature type="chain" id="PRO_0000367635" description="Glutamate--tRNA ligase 1">
    <location>
        <begin position="1"/>
        <end position="429"/>
    </location>
</feature>
<feature type="short sequence motif" description="'HIGH' region" evidence="1">
    <location>
        <begin position="6"/>
        <end position="16"/>
    </location>
</feature>
<feature type="short sequence motif" description="'KMSKS' region" evidence="1">
    <location>
        <begin position="235"/>
        <end position="239"/>
    </location>
</feature>
<feature type="binding site" evidence="1">
    <location>
        <position position="238"/>
    </location>
    <ligand>
        <name>ATP</name>
        <dbReference type="ChEBI" id="CHEBI:30616"/>
    </ligand>
</feature>
<proteinExistence type="inferred from homology"/>
<comment type="function">
    <text evidence="1">Catalyzes the attachment of glutamate to tRNA(Glu) in a two-step reaction: glutamate is first activated by ATP to form Glu-AMP and then transferred to the acceptor end of tRNA(Glu).</text>
</comment>
<comment type="catalytic activity">
    <reaction evidence="1">
        <text>tRNA(Glu) + L-glutamate + ATP = L-glutamyl-tRNA(Glu) + AMP + diphosphate</text>
        <dbReference type="Rhea" id="RHEA:23540"/>
        <dbReference type="Rhea" id="RHEA-COMP:9663"/>
        <dbReference type="Rhea" id="RHEA-COMP:9680"/>
        <dbReference type="ChEBI" id="CHEBI:29985"/>
        <dbReference type="ChEBI" id="CHEBI:30616"/>
        <dbReference type="ChEBI" id="CHEBI:33019"/>
        <dbReference type="ChEBI" id="CHEBI:78442"/>
        <dbReference type="ChEBI" id="CHEBI:78520"/>
        <dbReference type="ChEBI" id="CHEBI:456215"/>
        <dbReference type="EC" id="6.1.1.17"/>
    </reaction>
</comment>
<comment type="subunit">
    <text evidence="1">Monomer.</text>
</comment>
<comment type="subcellular location">
    <subcellularLocation>
        <location evidence="1">Cytoplasm</location>
    </subcellularLocation>
</comment>
<comment type="similarity">
    <text evidence="1">Belongs to the class-I aminoacyl-tRNA synthetase family. Glutamate--tRNA ligase type 1 subfamily.</text>
</comment>
<accession>A0RM82</accession>
<organism>
    <name type="scientific">Campylobacter fetus subsp. fetus (strain 82-40)</name>
    <dbReference type="NCBI Taxonomy" id="360106"/>
    <lineage>
        <taxon>Bacteria</taxon>
        <taxon>Pseudomonadati</taxon>
        <taxon>Campylobacterota</taxon>
        <taxon>Epsilonproteobacteria</taxon>
        <taxon>Campylobacterales</taxon>
        <taxon>Campylobacteraceae</taxon>
        <taxon>Campylobacter</taxon>
    </lineage>
</organism>
<name>SYE1_CAMFF</name>
<dbReference type="EC" id="6.1.1.17" evidence="1"/>
<dbReference type="EMBL" id="CP000487">
    <property type="protein sequence ID" value="ABK82769.1"/>
    <property type="molecule type" value="Genomic_DNA"/>
</dbReference>
<dbReference type="SMR" id="A0RM82"/>
<dbReference type="KEGG" id="cff:CFF8240_0105"/>
<dbReference type="eggNOG" id="COG0008">
    <property type="taxonomic scope" value="Bacteria"/>
</dbReference>
<dbReference type="HOGENOM" id="CLU_015768_6_0_7"/>
<dbReference type="Proteomes" id="UP000000760">
    <property type="component" value="Chromosome"/>
</dbReference>
<dbReference type="GO" id="GO:0005829">
    <property type="term" value="C:cytosol"/>
    <property type="evidence" value="ECO:0007669"/>
    <property type="project" value="TreeGrafter"/>
</dbReference>
<dbReference type="GO" id="GO:0005524">
    <property type="term" value="F:ATP binding"/>
    <property type="evidence" value="ECO:0007669"/>
    <property type="project" value="UniProtKB-UniRule"/>
</dbReference>
<dbReference type="GO" id="GO:0004818">
    <property type="term" value="F:glutamate-tRNA ligase activity"/>
    <property type="evidence" value="ECO:0007669"/>
    <property type="project" value="UniProtKB-UniRule"/>
</dbReference>
<dbReference type="GO" id="GO:0000049">
    <property type="term" value="F:tRNA binding"/>
    <property type="evidence" value="ECO:0007669"/>
    <property type="project" value="InterPro"/>
</dbReference>
<dbReference type="GO" id="GO:0006424">
    <property type="term" value="P:glutamyl-tRNA aminoacylation"/>
    <property type="evidence" value="ECO:0007669"/>
    <property type="project" value="UniProtKB-UniRule"/>
</dbReference>
<dbReference type="Gene3D" id="1.10.10.350">
    <property type="match status" value="1"/>
</dbReference>
<dbReference type="Gene3D" id="3.40.50.620">
    <property type="entry name" value="HUPs"/>
    <property type="match status" value="1"/>
</dbReference>
<dbReference type="HAMAP" id="MF_00022">
    <property type="entry name" value="Glu_tRNA_synth_type1"/>
    <property type="match status" value="1"/>
</dbReference>
<dbReference type="InterPro" id="IPR020751">
    <property type="entry name" value="aa-tRNA-synth_I_codon-bd_sub2"/>
</dbReference>
<dbReference type="InterPro" id="IPR001412">
    <property type="entry name" value="aa-tRNA-synth_I_CS"/>
</dbReference>
<dbReference type="InterPro" id="IPR008925">
    <property type="entry name" value="aa_tRNA-synth_I_cd-bd_sf"/>
</dbReference>
<dbReference type="InterPro" id="IPR004527">
    <property type="entry name" value="Glu-tRNA-ligase_bac/mito"/>
</dbReference>
<dbReference type="InterPro" id="IPR000924">
    <property type="entry name" value="Glu/Gln-tRNA-synth"/>
</dbReference>
<dbReference type="InterPro" id="IPR020058">
    <property type="entry name" value="Glu/Gln-tRNA-synth_Ib_cat-dom"/>
</dbReference>
<dbReference type="InterPro" id="IPR049940">
    <property type="entry name" value="GluQ/Sye"/>
</dbReference>
<dbReference type="InterPro" id="IPR014729">
    <property type="entry name" value="Rossmann-like_a/b/a_fold"/>
</dbReference>
<dbReference type="NCBIfam" id="TIGR00464">
    <property type="entry name" value="gltX_bact"/>
    <property type="match status" value="1"/>
</dbReference>
<dbReference type="PANTHER" id="PTHR43311">
    <property type="entry name" value="GLUTAMATE--TRNA LIGASE"/>
    <property type="match status" value="1"/>
</dbReference>
<dbReference type="PANTHER" id="PTHR43311:SF2">
    <property type="entry name" value="GLUTAMATE--TRNA LIGASE, MITOCHONDRIAL-RELATED"/>
    <property type="match status" value="1"/>
</dbReference>
<dbReference type="Pfam" id="PF00749">
    <property type="entry name" value="tRNA-synt_1c"/>
    <property type="match status" value="1"/>
</dbReference>
<dbReference type="PRINTS" id="PR00987">
    <property type="entry name" value="TRNASYNTHGLU"/>
</dbReference>
<dbReference type="SUPFAM" id="SSF48163">
    <property type="entry name" value="An anticodon-binding domain of class I aminoacyl-tRNA synthetases"/>
    <property type="match status" value="1"/>
</dbReference>
<dbReference type="SUPFAM" id="SSF52374">
    <property type="entry name" value="Nucleotidylyl transferase"/>
    <property type="match status" value="1"/>
</dbReference>
<dbReference type="PROSITE" id="PS00178">
    <property type="entry name" value="AA_TRNA_LIGASE_I"/>
    <property type="match status" value="1"/>
</dbReference>
<sequence>MYRFAPSPTGDMHIGNLRAAIFNYICSLQDNSGFILRIEDTDNARNIDGKDKEIFDILTKFNIKWDTLYYQSKNLKFHQEFAAKLLAEKKAFLCFCDETTLESKKEAAKTAGKPYRYDGTCENLSDDDVLSNPRPAAVRLKIKNEPQSFYDAIKGEVKFEPQNIDSFVLLRADKTPTYNFACAIDDMLEGVTFVIRGEDHVSNTPKQNLIREALGYTGKIGYAHLPIILNKEGKKMSKRENSSSVKWLLNRGYMPEAIANYLILLGNKTPCEIFTLEESLQWFSIKNISKSPAKFDEEKLAQINREHIKKASDERLKELGLSKPHLARFYTQECSLISEIKDKIDQIYSKKDISDEWKQNANLIKDAVLNSNIPNNFDELKNEIIQITNLKGKSLFMPFRLLLTGSEHGPELKELYALIKDDIKEIIAK</sequence>
<keyword id="KW-0030">Aminoacyl-tRNA synthetase</keyword>
<keyword id="KW-0067">ATP-binding</keyword>
<keyword id="KW-0963">Cytoplasm</keyword>
<keyword id="KW-0436">Ligase</keyword>
<keyword id="KW-0547">Nucleotide-binding</keyword>
<keyword id="KW-0648">Protein biosynthesis</keyword>
<gene>
    <name evidence="1" type="primary">gltX1</name>
    <name type="ordered locus">CFF8240_0105</name>
</gene>